<protein>
    <recommendedName>
        <fullName evidence="1">DNA-directed RNA polymerase subunit alpha</fullName>
        <shortName evidence="1">PEP</shortName>
        <ecNumber evidence="1">2.7.7.6</ecNumber>
    </recommendedName>
    <alternativeName>
        <fullName evidence="1">Plastid-encoded RNA polymerase subunit alpha</fullName>
        <shortName evidence="1">RNA polymerase subunit alpha</shortName>
    </alternativeName>
</protein>
<name>RPOA_NANDO</name>
<evidence type="ECO:0000255" key="1">
    <source>
        <dbReference type="HAMAP-Rule" id="MF_00059"/>
    </source>
</evidence>
<sequence length="338" mass="38577">MLREEVAVSTRTLQWRCVESRTDSKRLYYGRFVLSPLMKGQADTIGIAMRRALLGEIEGTCITHAKSEKIPHEYSTIVGIEESVHEILMNLKEIVLRSNLYGTCDASICVKGPINITAKDIISPPSVEIVDTTQHIASLTEPFDLCIGLQIERNRGYRMKTPNKAQNGSYPIDAVFMPVRNANHSIHSYGNGNEKQEILFLEIWTNGSLTPKEALHEASRNLIDLFIPFLHAEEQDIILEDNQNRVTLPFFTFHDGLAKLKKKNEIALKFIFIDQSELPSRTYNCLKKSNINTLLDLLNKSQEDLLKIEHFRIEDVKRVLGILQKRFVIDLPKNKFSN</sequence>
<dbReference type="EC" id="2.7.7.6" evidence="1"/>
<dbReference type="EMBL" id="DQ923117">
    <property type="protein sequence ID" value="ABI49896.1"/>
    <property type="molecule type" value="Genomic_DNA"/>
</dbReference>
<dbReference type="RefSeq" id="YP_740682.1">
    <property type="nucleotide sequence ID" value="NC_008336.1"/>
</dbReference>
<dbReference type="SMR" id="Q09FS9"/>
<dbReference type="GeneID" id="4271693"/>
<dbReference type="GO" id="GO:0009507">
    <property type="term" value="C:chloroplast"/>
    <property type="evidence" value="ECO:0007669"/>
    <property type="project" value="UniProtKB-SubCell"/>
</dbReference>
<dbReference type="GO" id="GO:0000428">
    <property type="term" value="C:DNA-directed RNA polymerase complex"/>
    <property type="evidence" value="ECO:0007669"/>
    <property type="project" value="UniProtKB-KW"/>
</dbReference>
<dbReference type="GO" id="GO:0005739">
    <property type="term" value="C:mitochondrion"/>
    <property type="evidence" value="ECO:0007669"/>
    <property type="project" value="GOC"/>
</dbReference>
<dbReference type="GO" id="GO:0003677">
    <property type="term" value="F:DNA binding"/>
    <property type="evidence" value="ECO:0007669"/>
    <property type="project" value="UniProtKB-UniRule"/>
</dbReference>
<dbReference type="GO" id="GO:0003899">
    <property type="term" value="F:DNA-directed RNA polymerase activity"/>
    <property type="evidence" value="ECO:0007669"/>
    <property type="project" value="UniProtKB-UniRule"/>
</dbReference>
<dbReference type="GO" id="GO:0046983">
    <property type="term" value="F:protein dimerization activity"/>
    <property type="evidence" value="ECO:0007669"/>
    <property type="project" value="InterPro"/>
</dbReference>
<dbReference type="GO" id="GO:0006351">
    <property type="term" value="P:DNA-templated transcription"/>
    <property type="evidence" value="ECO:0007669"/>
    <property type="project" value="UniProtKB-UniRule"/>
</dbReference>
<dbReference type="CDD" id="cd06928">
    <property type="entry name" value="RNAP_alpha_NTD"/>
    <property type="match status" value="1"/>
</dbReference>
<dbReference type="FunFam" id="2.170.120.12:FF:000001">
    <property type="entry name" value="DNA-directed RNA polymerase subunit alpha"/>
    <property type="match status" value="1"/>
</dbReference>
<dbReference type="FunFam" id="3.30.1360.10:FF:000039">
    <property type="entry name" value="DNA-directed RNA polymerase subunit alpha"/>
    <property type="match status" value="1"/>
</dbReference>
<dbReference type="Gene3D" id="1.10.150.20">
    <property type="entry name" value="5' to 3' exonuclease, C-terminal subdomain"/>
    <property type="match status" value="1"/>
</dbReference>
<dbReference type="Gene3D" id="2.170.120.12">
    <property type="entry name" value="DNA-directed RNA polymerase, insert domain"/>
    <property type="match status" value="1"/>
</dbReference>
<dbReference type="Gene3D" id="3.30.1360.10">
    <property type="entry name" value="RNA polymerase, RBP11-like subunit"/>
    <property type="match status" value="1"/>
</dbReference>
<dbReference type="HAMAP" id="MF_00059">
    <property type="entry name" value="RNApol_bact_RpoA"/>
    <property type="match status" value="1"/>
</dbReference>
<dbReference type="InterPro" id="IPR011262">
    <property type="entry name" value="DNA-dir_RNA_pol_insert"/>
</dbReference>
<dbReference type="InterPro" id="IPR011263">
    <property type="entry name" value="DNA-dir_RNA_pol_RpoA/D/Rpb3"/>
</dbReference>
<dbReference type="InterPro" id="IPR011773">
    <property type="entry name" value="DNA-dir_RpoA"/>
</dbReference>
<dbReference type="InterPro" id="IPR036603">
    <property type="entry name" value="RBP11-like"/>
</dbReference>
<dbReference type="InterPro" id="IPR011260">
    <property type="entry name" value="RNAP_asu_C"/>
</dbReference>
<dbReference type="InterPro" id="IPR036643">
    <property type="entry name" value="RNApol_insert_sf"/>
</dbReference>
<dbReference type="NCBIfam" id="TIGR02027">
    <property type="entry name" value="rpoA"/>
    <property type="match status" value="1"/>
</dbReference>
<dbReference type="Pfam" id="PF01000">
    <property type="entry name" value="RNA_pol_A_bac"/>
    <property type="match status" value="1"/>
</dbReference>
<dbReference type="Pfam" id="PF03118">
    <property type="entry name" value="RNA_pol_A_CTD"/>
    <property type="match status" value="1"/>
</dbReference>
<dbReference type="Pfam" id="PF01193">
    <property type="entry name" value="RNA_pol_L"/>
    <property type="match status" value="1"/>
</dbReference>
<dbReference type="SMART" id="SM00662">
    <property type="entry name" value="RPOLD"/>
    <property type="match status" value="1"/>
</dbReference>
<dbReference type="SUPFAM" id="SSF47789">
    <property type="entry name" value="C-terminal domain of RNA polymerase alpha subunit"/>
    <property type="match status" value="1"/>
</dbReference>
<dbReference type="SUPFAM" id="SSF56553">
    <property type="entry name" value="Insert subdomain of RNA polymerase alpha subunit"/>
    <property type="match status" value="1"/>
</dbReference>
<dbReference type="SUPFAM" id="SSF55257">
    <property type="entry name" value="RBP11-like subunits of RNA polymerase"/>
    <property type="match status" value="1"/>
</dbReference>
<proteinExistence type="inferred from homology"/>
<accession>Q09FS9</accession>
<reference key="1">
    <citation type="journal article" date="2006" name="BMC Plant Biol.">
        <title>Rapid and accurate pyrosequencing of angiosperm plastid genomes.</title>
        <authorList>
            <person name="Moore M.J."/>
            <person name="Dhingra A."/>
            <person name="Soltis P.S."/>
            <person name="Shaw R."/>
            <person name="Farmerie W.G."/>
            <person name="Folta K.M."/>
            <person name="Soltis D.E."/>
        </authorList>
    </citation>
    <scope>NUCLEOTIDE SEQUENCE [LARGE SCALE GENOMIC DNA]</scope>
</reference>
<geneLocation type="chloroplast"/>
<keyword id="KW-0150">Chloroplast</keyword>
<keyword id="KW-0240">DNA-directed RNA polymerase</keyword>
<keyword id="KW-0548">Nucleotidyltransferase</keyword>
<keyword id="KW-0934">Plastid</keyword>
<keyword id="KW-0804">Transcription</keyword>
<keyword id="KW-0808">Transferase</keyword>
<comment type="function">
    <text evidence="1">DNA-dependent RNA polymerase catalyzes the transcription of DNA into RNA using the four ribonucleoside triphosphates as substrates.</text>
</comment>
<comment type="catalytic activity">
    <reaction evidence="1">
        <text>RNA(n) + a ribonucleoside 5'-triphosphate = RNA(n+1) + diphosphate</text>
        <dbReference type="Rhea" id="RHEA:21248"/>
        <dbReference type="Rhea" id="RHEA-COMP:14527"/>
        <dbReference type="Rhea" id="RHEA-COMP:17342"/>
        <dbReference type="ChEBI" id="CHEBI:33019"/>
        <dbReference type="ChEBI" id="CHEBI:61557"/>
        <dbReference type="ChEBI" id="CHEBI:140395"/>
        <dbReference type="EC" id="2.7.7.6"/>
    </reaction>
</comment>
<comment type="subunit">
    <text evidence="1">In plastids the minimal PEP RNA polymerase catalytic core is composed of four subunits: alpha, beta, beta', and beta''. When a (nuclear-encoded) sigma factor is associated with the core the holoenzyme is formed, which can initiate transcription.</text>
</comment>
<comment type="subcellular location">
    <subcellularLocation>
        <location>Plastid</location>
        <location>Chloroplast</location>
    </subcellularLocation>
</comment>
<comment type="domain">
    <text evidence="1">The N-terminal domain is essential for RNAP assembly and basal transcription, whereas the C-terminal domain is involved in interaction with transcriptional regulators and with upstream promoter elements.</text>
</comment>
<comment type="similarity">
    <text evidence="1">Belongs to the RNA polymerase alpha chain family.</text>
</comment>
<organism>
    <name type="scientific">Nandina domestica</name>
    <name type="common">Heavenly bamboo</name>
    <dbReference type="NCBI Taxonomy" id="41776"/>
    <lineage>
        <taxon>Eukaryota</taxon>
        <taxon>Viridiplantae</taxon>
        <taxon>Streptophyta</taxon>
        <taxon>Embryophyta</taxon>
        <taxon>Tracheophyta</taxon>
        <taxon>Spermatophyta</taxon>
        <taxon>Magnoliopsida</taxon>
        <taxon>Ranunculales</taxon>
        <taxon>Berberidaceae</taxon>
        <taxon>Nandinoideae</taxon>
        <taxon>Nandineae</taxon>
        <taxon>Nandina</taxon>
    </lineage>
</organism>
<gene>
    <name evidence="1" type="primary">rpoA</name>
</gene>
<feature type="chain" id="PRO_0000296897" description="DNA-directed RNA polymerase subunit alpha">
    <location>
        <begin position="1"/>
        <end position="338"/>
    </location>
</feature>
<feature type="region of interest" description="Alpha N-terminal domain (alpha-NTD)" evidence="1">
    <location>
        <begin position="1"/>
        <end position="233"/>
    </location>
</feature>
<feature type="region of interest" description="Alpha C-terminal domain (alpha-CTD)" evidence="1">
    <location>
        <begin position="266"/>
        <end position="338"/>
    </location>
</feature>